<reference key="1">
    <citation type="journal article" date="2010" name="Genome Biol.">
        <title>Structure and dynamics of the pan-genome of Streptococcus pneumoniae and closely related species.</title>
        <authorList>
            <person name="Donati C."/>
            <person name="Hiller N.L."/>
            <person name="Tettelin H."/>
            <person name="Muzzi A."/>
            <person name="Croucher N.J."/>
            <person name="Angiuoli S.V."/>
            <person name="Oggioni M."/>
            <person name="Dunning Hotopp J.C."/>
            <person name="Hu F.Z."/>
            <person name="Riley D.R."/>
            <person name="Covacci A."/>
            <person name="Mitchell T.J."/>
            <person name="Bentley S.D."/>
            <person name="Kilian M."/>
            <person name="Ehrlich G.D."/>
            <person name="Rappuoli R."/>
            <person name="Moxon E.R."/>
            <person name="Masignani V."/>
        </authorList>
    </citation>
    <scope>NUCLEOTIDE SEQUENCE [LARGE SCALE GENOMIC DNA]</scope>
    <source>
        <strain>Hungary19A-6</strain>
    </source>
</reference>
<proteinExistence type="inferred from homology"/>
<protein>
    <recommendedName>
        <fullName evidence="1">Large ribosomal subunit protein uL1</fullName>
    </recommendedName>
    <alternativeName>
        <fullName evidence="2">50S ribosomal protein L1</fullName>
    </alternativeName>
</protein>
<evidence type="ECO:0000255" key="1">
    <source>
        <dbReference type="HAMAP-Rule" id="MF_01318"/>
    </source>
</evidence>
<evidence type="ECO:0000305" key="2"/>
<sequence>MAKKSKQLRAALEKIDSTKAYSVEEAVALAKETNFAKFDATVEVAYNLNIDVKKADQQIRGAMVLPNGTGKTSRVLVFARGAKAEEAKAAGADFVGEDDLVAKINDGWLDFDVVIATPDMMALVGRLGRVLGPRNLMPNPKTGTVTMDVAKAVEESKGGKITYRADRAGNVQAIIGKVSFEAEKLVENFKAFNETIQKAKPATAKGTYVTNLTITTTQGVGIKVDVNSL</sequence>
<feature type="chain" id="PRO_1000141468" description="Large ribosomal subunit protein uL1">
    <location>
        <begin position="1"/>
        <end position="229"/>
    </location>
</feature>
<organism>
    <name type="scientific">Streptococcus pneumoniae (strain Hungary19A-6)</name>
    <dbReference type="NCBI Taxonomy" id="487214"/>
    <lineage>
        <taxon>Bacteria</taxon>
        <taxon>Bacillati</taxon>
        <taxon>Bacillota</taxon>
        <taxon>Bacilli</taxon>
        <taxon>Lactobacillales</taxon>
        <taxon>Streptococcaceae</taxon>
        <taxon>Streptococcus</taxon>
    </lineage>
</organism>
<gene>
    <name evidence="1" type="primary">rplA</name>
    <name type="ordered locus">SPH_0724</name>
</gene>
<keyword id="KW-0678">Repressor</keyword>
<keyword id="KW-0687">Ribonucleoprotein</keyword>
<keyword id="KW-0689">Ribosomal protein</keyword>
<keyword id="KW-0694">RNA-binding</keyword>
<keyword id="KW-0699">rRNA-binding</keyword>
<keyword id="KW-0810">Translation regulation</keyword>
<keyword id="KW-0820">tRNA-binding</keyword>
<name>RL1_STRPI</name>
<accession>B1IAH4</accession>
<dbReference type="EMBL" id="CP000936">
    <property type="protein sequence ID" value="ACA37311.1"/>
    <property type="molecule type" value="Genomic_DNA"/>
</dbReference>
<dbReference type="RefSeq" id="WP_001085675.1">
    <property type="nucleotide sequence ID" value="NC_010380.1"/>
</dbReference>
<dbReference type="SMR" id="B1IAH4"/>
<dbReference type="GeneID" id="93739231"/>
<dbReference type="KEGG" id="spv:SPH_0724"/>
<dbReference type="HOGENOM" id="CLU_062853_0_0_9"/>
<dbReference type="Proteomes" id="UP000002163">
    <property type="component" value="Chromosome"/>
</dbReference>
<dbReference type="GO" id="GO:0015934">
    <property type="term" value="C:large ribosomal subunit"/>
    <property type="evidence" value="ECO:0007669"/>
    <property type="project" value="InterPro"/>
</dbReference>
<dbReference type="GO" id="GO:0019843">
    <property type="term" value="F:rRNA binding"/>
    <property type="evidence" value="ECO:0007669"/>
    <property type="project" value="UniProtKB-UniRule"/>
</dbReference>
<dbReference type="GO" id="GO:0003735">
    <property type="term" value="F:structural constituent of ribosome"/>
    <property type="evidence" value="ECO:0007669"/>
    <property type="project" value="InterPro"/>
</dbReference>
<dbReference type="GO" id="GO:0000049">
    <property type="term" value="F:tRNA binding"/>
    <property type="evidence" value="ECO:0007669"/>
    <property type="project" value="UniProtKB-KW"/>
</dbReference>
<dbReference type="GO" id="GO:0006417">
    <property type="term" value="P:regulation of translation"/>
    <property type="evidence" value="ECO:0007669"/>
    <property type="project" value="UniProtKB-KW"/>
</dbReference>
<dbReference type="GO" id="GO:0006412">
    <property type="term" value="P:translation"/>
    <property type="evidence" value="ECO:0007669"/>
    <property type="project" value="UniProtKB-UniRule"/>
</dbReference>
<dbReference type="CDD" id="cd00403">
    <property type="entry name" value="Ribosomal_L1"/>
    <property type="match status" value="1"/>
</dbReference>
<dbReference type="FunFam" id="3.40.50.790:FF:000001">
    <property type="entry name" value="50S ribosomal protein L1"/>
    <property type="match status" value="1"/>
</dbReference>
<dbReference type="Gene3D" id="3.30.190.20">
    <property type="match status" value="1"/>
</dbReference>
<dbReference type="Gene3D" id="3.40.50.790">
    <property type="match status" value="1"/>
</dbReference>
<dbReference type="HAMAP" id="MF_01318_B">
    <property type="entry name" value="Ribosomal_uL1_B"/>
    <property type="match status" value="1"/>
</dbReference>
<dbReference type="InterPro" id="IPR005878">
    <property type="entry name" value="Ribosom_uL1_bac-type"/>
</dbReference>
<dbReference type="InterPro" id="IPR002143">
    <property type="entry name" value="Ribosomal_uL1"/>
</dbReference>
<dbReference type="InterPro" id="IPR023674">
    <property type="entry name" value="Ribosomal_uL1-like"/>
</dbReference>
<dbReference type="InterPro" id="IPR028364">
    <property type="entry name" value="Ribosomal_uL1/biogenesis"/>
</dbReference>
<dbReference type="InterPro" id="IPR016095">
    <property type="entry name" value="Ribosomal_uL1_3-a/b-sand"/>
</dbReference>
<dbReference type="InterPro" id="IPR023673">
    <property type="entry name" value="Ribosomal_uL1_CS"/>
</dbReference>
<dbReference type="NCBIfam" id="TIGR01169">
    <property type="entry name" value="rplA_bact"/>
    <property type="match status" value="1"/>
</dbReference>
<dbReference type="PANTHER" id="PTHR36427">
    <property type="entry name" value="54S RIBOSOMAL PROTEIN L1, MITOCHONDRIAL"/>
    <property type="match status" value="1"/>
</dbReference>
<dbReference type="PANTHER" id="PTHR36427:SF3">
    <property type="entry name" value="LARGE RIBOSOMAL SUBUNIT PROTEIN UL1M"/>
    <property type="match status" value="1"/>
</dbReference>
<dbReference type="Pfam" id="PF00687">
    <property type="entry name" value="Ribosomal_L1"/>
    <property type="match status" value="1"/>
</dbReference>
<dbReference type="PIRSF" id="PIRSF002155">
    <property type="entry name" value="Ribosomal_L1"/>
    <property type="match status" value="1"/>
</dbReference>
<dbReference type="SUPFAM" id="SSF56808">
    <property type="entry name" value="Ribosomal protein L1"/>
    <property type="match status" value="1"/>
</dbReference>
<dbReference type="PROSITE" id="PS01199">
    <property type="entry name" value="RIBOSOMAL_L1"/>
    <property type="match status" value="1"/>
</dbReference>
<comment type="function">
    <text evidence="1">Binds directly to 23S rRNA. The L1 stalk is quite mobile in the ribosome, and is involved in E site tRNA release.</text>
</comment>
<comment type="function">
    <text evidence="1">Protein L1 is also a translational repressor protein, it controls the translation of the L11 operon by binding to its mRNA.</text>
</comment>
<comment type="subunit">
    <text evidence="1">Part of the 50S ribosomal subunit.</text>
</comment>
<comment type="similarity">
    <text evidence="1">Belongs to the universal ribosomal protein uL1 family.</text>
</comment>